<evidence type="ECO:0000305" key="1"/>
<evidence type="ECO:0007829" key="2">
    <source>
        <dbReference type="PDB" id="1GHH"/>
    </source>
</evidence>
<evidence type="ECO:0007829" key="3">
    <source>
        <dbReference type="PDB" id="7YWA"/>
    </source>
</evidence>
<reference key="1">
    <citation type="journal article" date="1996" name="J. Bacteriol.">
        <title>Multicopy suppressors of the cold-sensitive phenotype of the pcsA68 (dinD68) mutation in Escherichia coli.</title>
        <authorList>
            <person name="Yasuda T."/>
            <person name="Nagata T."/>
            <person name="Ohmori H."/>
        </authorList>
    </citation>
    <scope>NUCLEOTIDE SEQUENCE [GENOMIC DNA]</scope>
    <source>
        <strain>K12 / W3110 / ATCC 27325 / DSM 5911</strain>
    </source>
</reference>
<reference key="2">
    <citation type="journal article" date="1996" name="DNA Res.">
        <title>A 718-kb DNA sequence of the Escherichia coli K-12 genome corresponding to the 12.7-28.0 min region on the linkage map.</title>
        <authorList>
            <person name="Oshima T."/>
            <person name="Aiba H."/>
            <person name="Baba T."/>
            <person name="Fujita K."/>
            <person name="Hayashi K."/>
            <person name="Honjo A."/>
            <person name="Ikemoto K."/>
            <person name="Inada T."/>
            <person name="Itoh T."/>
            <person name="Kajihara M."/>
            <person name="Kanai K."/>
            <person name="Kashimoto K."/>
            <person name="Kimura S."/>
            <person name="Kitagawa M."/>
            <person name="Makino K."/>
            <person name="Masuda S."/>
            <person name="Miki T."/>
            <person name="Mizobuchi K."/>
            <person name="Mori H."/>
            <person name="Motomura K."/>
            <person name="Nakamura Y."/>
            <person name="Nashimoto H."/>
            <person name="Nishio Y."/>
            <person name="Saito N."/>
            <person name="Sampei G."/>
            <person name="Seki Y."/>
            <person name="Tagami H."/>
            <person name="Takemoto K."/>
            <person name="Wada C."/>
            <person name="Yamamoto Y."/>
            <person name="Yano M."/>
            <person name="Horiuchi T."/>
        </authorList>
    </citation>
    <scope>NUCLEOTIDE SEQUENCE [LARGE SCALE GENOMIC DNA]</scope>
    <source>
        <strain>K12 / W3110 / ATCC 27325 / DSM 5911</strain>
    </source>
</reference>
<reference key="3">
    <citation type="journal article" date="1997" name="Science">
        <title>The complete genome sequence of Escherichia coli K-12.</title>
        <authorList>
            <person name="Blattner F.R."/>
            <person name="Plunkett G. III"/>
            <person name="Bloch C.A."/>
            <person name="Perna N.T."/>
            <person name="Burland V."/>
            <person name="Riley M."/>
            <person name="Collado-Vides J."/>
            <person name="Glasner J.D."/>
            <person name="Rode C.K."/>
            <person name="Mayhew G.F."/>
            <person name="Gregor J."/>
            <person name="Davis N.W."/>
            <person name="Kirkpatrick H.A."/>
            <person name="Goeden M.A."/>
            <person name="Rose D.J."/>
            <person name="Mau B."/>
            <person name="Shao Y."/>
        </authorList>
    </citation>
    <scope>NUCLEOTIDE SEQUENCE [LARGE SCALE GENOMIC DNA]</scope>
    <source>
        <strain>K12 / MG1655 / ATCC 47076</strain>
    </source>
</reference>
<reference key="4">
    <citation type="journal article" date="2006" name="Mol. Syst. Biol.">
        <title>Highly accurate genome sequences of Escherichia coli K-12 strains MG1655 and W3110.</title>
        <authorList>
            <person name="Hayashi K."/>
            <person name="Morooka N."/>
            <person name="Yamamoto Y."/>
            <person name="Fujita K."/>
            <person name="Isono K."/>
            <person name="Choi S."/>
            <person name="Ohtsubo E."/>
            <person name="Baba T."/>
            <person name="Wanner B.L."/>
            <person name="Mori H."/>
            <person name="Horiuchi T."/>
        </authorList>
    </citation>
    <scope>NUCLEOTIDE SEQUENCE [LARGE SCALE GENOMIC DNA]</scope>
    <source>
        <strain>K12 / W3110 / ATCC 27325 / DSM 5911</strain>
    </source>
</reference>
<reference key="5">
    <citation type="journal article" date="2001" name="Genes Dev.">
        <title>A model for the abrogation of the SOS response by an SOS protein: a negatively charged helix in DinI mimics DNA in its interaction with RecA.</title>
        <authorList>
            <person name="Voloshin O.N."/>
            <person name="Ramirez B.E."/>
            <person name="Bax A."/>
            <person name="Camerini-Otero R.D."/>
        </authorList>
    </citation>
    <scope>CHARACTERIZATION</scope>
</reference>
<reference key="6">
    <citation type="journal article" date="2000" name="Protein Sci.">
        <title>Solution structure of dinI provides insight into its mode of recA inactivation.</title>
        <authorList>
            <person name="Ramirez B.E."/>
            <person name="Voloshin O.N."/>
            <person name="Camerini-Otero R.D."/>
            <person name="Bax A."/>
        </authorList>
    </citation>
    <scope>STRUCTURE BY NMR</scope>
</reference>
<proteinExistence type="evidence at protein level"/>
<comment type="function">
    <text>Involved in SOS regulation. Inhibits RecA by preventing RecA to bind ssDNA. Can displace ssDNA from RecA.</text>
</comment>
<comment type="similarity">
    <text evidence="1">Belongs to the DinI family.</text>
</comment>
<organism>
    <name type="scientific">Escherichia coli (strain K12)</name>
    <dbReference type="NCBI Taxonomy" id="83333"/>
    <lineage>
        <taxon>Bacteria</taxon>
        <taxon>Pseudomonadati</taxon>
        <taxon>Pseudomonadota</taxon>
        <taxon>Gammaproteobacteria</taxon>
        <taxon>Enterobacterales</taxon>
        <taxon>Enterobacteriaceae</taxon>
        <taxon>Escherichia</taxon>
    </lineage>
</organism>
<accession>P0ABR1</accession>
<accession>Q47143</accession>
<accession>Q9R2Y7</accession>
<sequence>MRIEVTIAKTSPLPAGAIDALAGELSRRIQYAFPDNEGHVSVRYAAANNLSVIGATKEDKQRISEILQETWESADDWFVSE</sequence>
<feature type="chain" id="PRO_0000201635" description="DNA damage-inducible protein I">
    <location>
        <begin position="1"/>
        <end position="81"/>
    </location>
</feature>
<feature type="strand" evidence="3">
    <location>
        <begin position="2"/>
        <end position="8"/>
    </location>
</feature>
<feature type="helix" evidence="3">
    <location>
        <begin position="17"/>
        <end position="32"/>
    </location>
</feature>
<feature type="strand" evidence="2">
    <location>
        <begin position="34"/>
        <end position="36"/>
    </location>
</feature>
<feature type="strand" evidence="3">
    <location>
        <begin position="39"/>
        <end position="47"/>
    </location>
</feature>
<feature type="strand" evidence="3">
    <location>
        <begin position="49"/>
        <end position="54"/>
    </location>
</feature>
<feature type="helix" evidence="3">
    <location>
        <begin position="57"/>
        <end position="72"/>
    </location>
</feature>
<feature type="helix" evidence="3">
    <location>
        <begin position="74"/>
        <end position="77"/>
    </location>
</feature>
<dbReference type="EMBL" id="D31709">
    <property type="protein sequence ID" value="BAA06515.1"/>
    <property type="molecule type" value="Genomic_DNA"/>
</dbReference>
<dbReference type="EMBL" id="U00096">
    <property type="protein sequence ID" value="AAC74145.1"/>
    <property type="molecule type" value="Genomic_DNA"/>
</dbReference>
<dbReference type="EMBL" id="AP009048">
    <property type="protein sequence ID" value="BAA35858.2"/>
    <property type="molecule type" value="Genomic_DNA"/>
</dbReference>
<dbReference type="PIR" id="B64849">
    <property type="entry name" value="B64849"/>
</dbReference>
<dbReference type="RefSeq" id="NP_415579.1">
    <property type="nucleotide sequence ID" value="NC_000913.3"/>
</dbReference>
<dbReference type="RefSeq" id="WP_001217754.1">
    <property type="nucleotide sequence ID" value="NZ_STEB01000016.1"/>
</dbReference>
<dbReference type="PDB" id="1GHH">
    <property type="method" value="NMR"/>
    <property type="chains" value="A=1-81"/>
</dbReference>
<dbReference type="PDB" id="7YWA">
    <property type="method" value="EM"/>
    <property type="resolution" value="3.26 A"/>
    <property type="chains" value="A=1-81"/>
</dbReference>
<dbReference type="PDBsum" id="1GHH"/>
<dbReference type="PDBsum" id="7YWA"/>
<dbReference type="EMDB" id="EMD-34151"/>
<dbReference type="SMR" id="P0ABR1"/>
<dbReference type="BioGRID" id="4261873">
    <property type="interactions" value="136"/>
</dbReference>
<dbReference type="DIP" id="DIP-9445N"/>
<dbReference type="FunCoup" id="P0ABR1">
    <property type="interactions" value="39"/>
</dbReference>
<dbReference type="STRING" id="511145.b1061"/>
<dbReference type="PaxDb" id="511145-b1061"/>
<dbReference type="EnsemblBacteria" id="AAC74145">
    <property type="protein sequence ID" value="AAC74145"/>
    <property type="gene ID" value="b1061"/>
</dbReference>
<dbReference type="GeneID" id="93776346"/>
<dbReference type="GeneID" id="945022"/>
<dbReference type="KEGG" id="ecj:JW1048"/>
<dbReference type="KEGG" id="eco:b1061"/>
<dbReference type="KEGG" id="ecoc:C3026_06450"/>
<dbReference type="PATRIC" id="fig|1411691.4.peg.1207"/>
<dbReference type="EchoBASE" id="EB2536"/>
<dbReference type="eggNOG" id="ENOG5032TF2">
    <property type="taxonomic scope" value="Bacteria"/>
</dbReference>
<dbReference type="HOGENOM" id="CLU_139795_1_0_6"/>
<dbReference type="InParanoid" id="P0ABR1"/>
<dbReference type="OMA" id="MTPWCHS"/>
<dbReference type="OrthoDB" id="6590090at2"/>
<dbReference type="PhylomeDB" id="P0ABR1"/>
<dbReference type="BioCyc" id="EcoCyc:G6558-MONOMER"/>
<dbReference type="EvolutionaryTrace" id="P0ABR1"/>
<dbReference type="PRO" id="PR:P0ABR1"/>
<dbReference type="Proteomes" id="UP000000625">
    <property type="component" value="Chromosome"/>
</dbReference>
<dbReference type="GO" id="GO:0019899">
    <property type="term" value="F:enzyme binding"/>
    <property type="evidence" value="ECO:0000353"/>
    <property type="project" value="EcoCyc"/>
</dbReference>
<dbReference type="GO" id="GO:0006281">
    <property type="term" value="P:DNA repair"/>
    <property type="evidence" value="ECO:0007669"/>
    <property type="project" value="UniProtKB-KW"/>
</dbReference>
<dbReference type="GO" id="GO:0009432">
    <property type="term" value="P:SOS response"/>
    <property type="evidence" value="ECO:0000314"/>
    <property type="project" value="EcoCyc"/>
</dbReference>
<dbReference type="FunFam" id="3.30.910.10:FF:000001">
    <property type="entry name" value="DNA damage-inducible protein I"/>
    <property type="match status" value="1"/>
</dbReference>
<dbReference type="Gene3D" id="3.30.910.10">
    <property type="entry name" value="DinI-like"/>
    <property type="match status" value="1"/>
</dbReference>
<dbReference type="InterPro" id="IPR036687">
    <property type="entry name" value="DinI-like_sf"/>
</dbReference>
<dbReference type="InterPro" id="IPR010391">
    <property type="entry name" value="DNA_damage-inducible_DinI-like"/>
</dbReference>
<dbReference type="NCBIfam" id="NF007893">
    <property type="entry name" value="PRK10597.1"/>
    <property type="match status" value="1"/>
</dbReference>
<dbReference type="PANTHER" id="PTHR36572:SF2">
    <property type="entry name" value="DNA DAMAGE-INDUCIBLE PROTEIN I"/>
    <property type="match status" value="1"/>
</dbReference>
<dbReference type="PANTHER" id="PTHR36572">
    <property type="entry name" value="DNA DAMAGE-INDUCIBLE PROTEIN I-RELATED"/>
    <property type="match status" value="1"/>
</dbReference>
<dbReference type="Pfam" id="PF06183">
    <property type="entry name" value="DinI"/>
    <property type="match status" value="1"/>
</dbReference>
<dbReference type="SUPFAM" id="SSF54857">
    <property type="entry name" value="DNA damage-inducible protein DinI"/>
    <property type="match status" value="1"/>
</dbReference>
<keyword id="KW-0002">3D-structure</keyword>
<keyword id="KW-0227">DNA damage</keyword>
<keyword id="KW-0234">DNA repair</keyword>
<keyword id="KW-1185">Reference proteome</keyword>
<keyword id="KW-0742">SOS response</keyword>
<protein>
    <recommendedName>
        <fullName>DNA damage-inducible protein I</fullName>
    </recommendedName>
</protein>
<name>DINI_ECOLI</name>
<gene>
    <name type="primary">dinI</name>
    <name type="ordered locus">b1061</name>
    <name type="ordered locus">JW1048</name>
</gene>